<proteinExistence type="inferred from homology"/>
<feature type="chain" id="PRO_1000020034" description="Methionyl-tRNA formyltransferase">
    <location>
        <begin position="1"/>
        <end position="327"/>
    </location>
</feature>
<feature type="binding site" evidence="1">
    <location>
        <begin position="121"/>
        <end position="124"/>
    </location>
    <ligand>
        <name>(6S)-5,6,7,8-tetrahydrofolate</name>
        <dbReference type="ChEBI" id="CHEBI:57453"/>
    </ligand>
</feature>
<accession>Q3JXE1</accession>
<organism>
    <name type="scientific">Burkholderia pseudomallei (strain 1710b)</name>
    <dbReference type="NCBI Taxonomy" id="320372"/>
    <lineage>
        <taxon>Bacteria</taxon>
        <taxon>Pseudomonadati</taxon>
        <taxon>Pseudomonadota</taxon>
        <taxon>Betaproteobacteria</taxon>
        <taxon>Burkholderiales</taxon>
        <taxon>Burkholderiaceae</taxon>
        <taxon>Burkholderia</taxon>
        <taxon>pseudomallei group</taxon>
    </lineage>
</organism>
<reference key="1">
    <citation type="journal article" date="2010" name="Genome Biol. Evol.">
        <title>Continuing evolution of Burkholderia mallei through genome reduction and large-scale rearrangements.</title>
        <authorList>
            <person name="Losada L."/>
            <person name="Ronning C.M."/>
            <person name="DeShazer D."/>
            <person name="Woods D."/>
            <person name="Fedorova N."/>
            <person name="Kim H.S."/>
            <person name="Shabalina S.A."/>
            <person name="Pearson T.R."/>
            <person name="Brinkac L."/>
            <person name="Tan P."/>
            <person name="Nandi T."/>
            <person name="Crabtree J."/>
            <person name="Badger J."/>
            <person name="Beckstrom-Sternberg S."/>
            <person name="Saqib M."/>
            <person name="Schutzer S.E."/>
            <person name="Keim P."/>
            <person name="Nierman W.C."/>
        </authorList>
    </citation>
    <scope>NUCLEOTIDE SEQUENCE [LARGE SCALE GENOMIC DNA]</scope>
    <source>
        <strain>1710b</strain>
    </source>
</reference>
<keyword id="KW-0648">Protein biosynthesis</keyword>
<keyword id="KW-0808">Transferase</keyword>
<protein>
    <recommendedName>
        <fullName evidence="1">Methionyl-tRNA formyltransferase</fullName>
        <ecNumber evidence="1">2.1.2.9</ecNumber>
    </recommendedName>
</protein>
<name>FMT_BURP1</name>
<evidence type="ECO:0000255" key="1">
    <source>
        <dbReference type="HAMAP-Rule" id="MF_00182"/>
    </source>
</evidence>
<comment type="function">
    <text evidence="1">Attaches a formyl group to the free amino group of methionyl-tRNA(fMet). The formyl group appears to play a dual role in the initiator identity of N-formylmethionyl-tRNA by promoting its recognition by IF2 and preventing the misappropriation of this tRNA by the elongation apparatus.</text>
</comment>
<comment type="catalytic activity">
    <reaction evidence="1">
        <text>L-methionyl-tRNA(fMet) + (6R)-10-formyltetrahydrofolate = N-formyl-L-methionyl-tRNA(fMet) + (6S)-5,6,7,8-tetrahydrofolate + H(+)</text>
        <dbReference type="Rhea" id="RHEA:24380"/>
        <dbReference type="Rhea" id="RHEA-COMP:9952"/>
        <dbReference type="Rhea" id="RHEA-COMP:9953"/>
        <dbReference type="ChEBI" id="CHEBI:15378"/>
        <dbReference type="ChEBI" id="CHEBI:57453"/>
        <dbReference type="ChEBI" id="CHEBI:78530"/>
        <dbReference type="ChEBI" id="CHEBI:78844"/>
        <dbReference type="ChEBI" id="CHEBI:195366"/>
        <dbReference type="EC" id="2.1.2.9"/>
    </reaction>
</comment>
<comment type="similarity">
    <text evidence="1">Belongs to the Fmt family.</text>
</comment>
<gene>
    <name evidence="1" type="primary">fmt</name>
    <name type="ordered locus">BURPS1710b_0347</name>
</gene>
<sequence length="327" mass="33934">MTHSLRVIFAGTPEFAAAALAAIHEAGFPVPLVLTQPDRPAGRGMKLQASAVKRYAFERGMAVAQPPSLRRAGKYPAEAVAALDLLHATPHDVMVVAAYGLLLPQEVLELPRHGCINIHASLLPRWRGAAPIHRAIEAGDAETGVTLMQMDAGLDTGAMLHEARVAIAPDDTTATLHDKLAAAGARLVVDALVELERTGALAATPQPADGVTYAEKIGKHEAALDWRKPAAALARQVRAFDPFPGGAGTLDGATLKLWAADAVPGRDDAAPGTIVDIGPDGVVIACGEGALRVTQLQKPGGKRLPAREFLAGAPLAVGQRFAPADAA</sequence>
<dbReference type="EC" id="2.1.2.9" evidence="1"/>
<dbReference type="EMBL" id="CP000124">
    <property type="protein sequence ID" value="ABA47683.1"/>
    <property type="molecule type" value="Genomic_DNA"/>
</dbReference>
<dbReference type="RefSeq" id="WP_004525853.1">
    <property type="nucleotide sequence ID" value="NC_007434.1"/>
</dbReference>
<dbReference type="SMR" id="Q3JXE1"/>
<dbReference type="EnsemblBacteria" id="ABA47683">
    <property type="protein sequence ID" value="ABA47683"/>
    <property type="gene ID" value="BURPS1710b_0347"/>
</dbReference>
<dbReference type="KEGG" id="bpm:BURPS1710b_0347"/>
<dbReference type="HOGENOM" id="CLU_033347_1_2_4"/>
<dbReference type="Proteomes" id="UP000002700">
    <property type="component" value="Chromosome I"/>
</dbReference>
<dbReference type="GO" id="GO:0005829">
    <property type="term" value="C:cytosol"/>
    <property type="evidence" value="ECO:0007669"/>
    <property type="project" value="TreeGrafter"/>
</dbReference>
<dbReference type="GO" id="GO:0004479">
    <property type="term" value="F:methionyl-tRNA formyltransferase activity"/>
    <property type="evidence" value="ECO:0007669"/>
    <property type="project" value="UniProtKB-UniRule"/>
</dbReference>
<dbReference type="CDD" id="cd08646">
    <property type="entry name" value="FMT_core_Met-tRNA-FMT_N"/>
    <property type="match status" value="1"/>
</dbReference>
<dbReference type="CDD" id="cd08704">
    <property type="entry name" value="Met_tRNA_FMT_C"/>
    <property type="match status" value="1"/>
</dbReference>
<dbReference type="FunFam" id="3.40.50.12230:FF:000001">
    <property type="entry name" value="Methionyl-tRNA formyltransferase"/>
    <property type="match status" value="1"/>
</dbReference>
<dbReference type="Gene3D" id="3.10.25.10">
    <property type="entry name" value="Formyl transferase, C-terminal domain"/>
    <property type="match status" value="1"/>
</dbReference>
<dbReference type="Gene3D" id="3.40.50.170">
    <property type="entry name" value="Formyl transferase, N-terminal domain"/>
    <property type="match status" value="1"/>
</dbReference>
<dbReference type="HAMAP" id="MF_00182">
    <property type="entry name" value="Formyl_trans"/>
    <property type="match status" value="1"/>
</dbReference>
<dbReference type="InterPro" id="IPR005794">
    <property type="entry name" value="Fmt"/>
</dbReference>
<dbReference type="InterPro" id="IPR005793">
    <property type="entry name" value="Formyl_trans_C"/>
</dbReference>
<dbReference type="InterPro" id="IPR037022">
    <property type="entry name" value="Formyl_trans_C_sf"/>
</dbReference>
<dbReference type="InterPro" id="IPR002376">
    <property type="entry name" value="Formyl_transf_N"/>
</dbReference>
<dbReference type="InterPro" id="IPR036477">
    <property type="entry name" value="Formyl_transf_N_sf"/>
</dbReference>
<dbReference type="InterPro" id="IPR011034">
    <property type="entry name" value="Formyl_transferase-like_C_sf"/>
</dbReference>
<dbReference type="InterPro" id="IPR001555">
    <property type="entry name" value="GART_AS"/>
</dbReference>
<dbReference type="InterPro" id="IPR044135">
    <property type="entry name" value="Met-tRNA-FMT_C"/>
</dbReference>
<dbReference type="InterPro" id="IPR041711">
    <property type="entry name" value="Met-tRNA-FMT_N"/>
</dbReference>
<dbReference type="NCBIfam" id="TIGR00460">
    <property type="entry name" value="fmt"/>
    <property type="match status" value="1"/>
</dbReference>
<dbReference type="PANTHER" id="PTHR11138">
    <property type="entry name" value="METHIONYL-TRNA FORMYLTRANSFERASE"/>
    <property type="match status" value="1"/>
</dbReference>
<dbReference type="PANTHER" id="PTHR11138:SF5">
    <property type="entry name" value="METHIONYL-TRNA FORMYLTRANSFERASE, MITOCHONDRIAL"/>
    <property type="match status" value="1"/>
</dbReference>
<dbReference type="Pfam" id="PF02911">
    <property type="entry name" value="Formyl_trans_C"/>
    <property type="match status" value="1"/>
</dbReference>
<dbReference type="Pfam" id="PF00551">
    <property type="entry name" value="Formyl_trans_N"/>
    <property type="match status" value="1"/>
</dbReference>
<dbReference type="SUPFAM" id="SSF50486">
    <property type="entry name" value="FMT C-terminal domain-like"/>
    <property type="match status" value="1"/>
</dbReference>
<dbReference type="SUPFAM" id="SSF53328">
    <property type="entry name" value="Formyltransferase"/>
    <property type="match status" value="1"/>
</dbReference>
<dbReference type="PROSITE" id="PS00373">
    <property type="entry name" value="GART"/>
    <property type="match status" value="1"/>
</dbReference>